<feature type="chain" id="PRO_1000144002" description="Large ribosomal subunit protein uL6">
    <location>
        <begin position="1"/>
        <end position="181"/>
    </location>
</feature>
<proteinExistence type="inferred from homology"/>
<dbReference type="EMBL" id="CP001130">
    <property type="protein sequence ID" value="ACG56970.1"/>
    <property type="molecule type" value="Genomic_DNA"/>
</dbReference>
<dbReference type="RefSeq" id="WP_012513326.1">
    <property type="nucleotide sequence ID" value="NC_011126.1"/>
</dbReference>
<dbReference type="SMR" id="B4U759"/>
<dbReference type="STRING" id="380749.HY04AAS1_0280"/>
<dbReference type="KEGG" id="hya:HY04AAS1_0280"/>
<dbReference type="eggNOG" id="COG0097">
    <property type="taxonomic scope" value="Bacteria"/>
</dbReference>
<dbReference type="HOGENOM" id="CLU_065464_1_2_0"/>
<dbReference type="OrthoDB" id="9805007at2"/>
<dbReference type="GO" id="GO:0022625">
    <property type="term" value="C:cytosolic large ribosomal subunit"/>
    <property type="evidence" value="ECO:0007669"/>
    <property type="project" value="TreeGrafter"/>
</dbReference>
<dbReference type="GO" id="GO:0019843">
    <property type="term" value="F:rRNA binding"/>
    <property type="evidence" value="ECO:0007669"/>
    <property type="project" value="UniProtKB-UniRule"/>
</dbReference>
<dbReference type="GO" id="GO:0003735">
    <property type="term" value="F:structural constituent of ribosome"/>
    <property type="evidence" value="ECO:0007669"/>
    <property type="project" value="InterPro"/>
</dbReference>
<dbReference type="GO" id="GO:0002181">
    <property type="term" value="P:cytoplasmic translation"/>
    <property type="evidence" value="ECO:0007669"/>
    <property type="project" value="TreeGrafter"/>
</dbReference>
<dbReference type="FunFam" id="3.90.930.12:FF:000001">
    <property type="entry name" value="50S ribosomal protein L6"/>
    <property type="match status" value="1"/>
</dbReference>
<dbReference type="FunFam" id="3.90.930.12:FF:000002">
    <property type="entry name" value="50S ribosomal protein L6"/>
    <property type="match status" value="1"/>
</dbReference>
<dbReference type="Gene3D" id="3.90.930.12">
    <property type="entry name" value="Ribosomal protein L6, alpha-beta domain"/>
    <property type="match status" value="2"/>
</dbReference>
<dbReference type="HAMAP" id="MF_01365_B">
    <property type="entry name" value="Ribosomal_uL6_B"/>
    <property type="match status" value="1"/>
</dbReference>
<dbReference type="InterPro" id="IPR000702">
    <property type="entry name" value="Ribosomal_uL6-like"/>
</dbReference>
<dbReference type="InterPro" id="IPR036789">
    <property type="entry name" value="Ribosomal_uL6-like_a/b-dom_sf"/>
</dbReference>
<dbReference type="InterPro" id="IPR020040">
    <property type="entry name" value="Ribosomal_uL6_a/b-dom"/>
</dbReference>
<dbReference type="InterPro" id="IPR019906">
    <property type="entry name" value="Ribosomal_uL6_bac-type"/>
</dbReference>
<dbReference type="InterPro" id="IPR002358">
    <property type="entry name" value="Ribosomal_uL6_CS"/>
</dbReference>
<dbReference type="NCBIfam" id="TIGR03654">
    <property type="entry name" value="L6_bact"/>
    <property type="match status" value="1"/>
</dbReference>
<dbReference type="PANTHER" id="PTHR11655">
    <property type="entry name" value="60S/50S RIBOSOMAL PROTEIN L6/L9"/>
    <property type="match status" value="1"/>
</dbReference>
<dbReference type="PANTHER" id="PTHR11655:SF14">
    <property type="entry name" value="LARGE RIBOSOMAL SUBUNIT PROTEIN UL6M"/>
    <property type="match status" value="1"/>
</dbReference>
<dbReference type="Pfam" id="PF00347">
    <property type="entry name" value="Ribosomal_L6"/>
    <property type="match status" value="2"/>
</dbReference>
<dbReference type="PIRSF" id="PIRSF002162">
    <property type="entry name" value="Ribosomal_L6"/>
    <property type="match status" value="1"/>
</dbReference>
<dbReference type="PRINTS" id="PR00059">
    <property type="entry name" value="RIBOSOMALL6"/>
</dbReference>
<dbReference type="SUPFAM" id="SSF56053">
    <property type="entry name" value="Ribosomal protein L6"/>
    <property type="match status" value="2"/>
</dbReference>
<dbReference type="PROSITE" id="PS00525">
    <property type="entry name" value="RIBOSOMAL_L6_1"/>
    <property type="match status" value="1"/>
</dbReference>
<keyword id="KW-0687">Ribonucleoprotein</keyword>
<keyword id="KW-0689">Ribosomal protein</keyword>
<keyword id="KW-0694">RNA-binding</keyword>
<keyword id="KW-0699">rRNA-binding</keyword>
<sequence>MSRIGKKPIAIPNNVKVSLDGNVLTIEGPKGKLSMPVHEIVNVKIDNNQITVSKNQESPFAQAMHGTTAALIKNTIEGVSKGYSVTLEVVGLGYKAAMKGQELELNLGYSHPIYYKPPAGIKLEVKENKITVSGIDKQLVGQVAAEIIKFRKPDPYKGKGIRYEGQVLKLKPGKSAGKGKK</sequence>
<protein>
    <recommendedName>
        <fullName evidence="1">Large ribosomal subunit protein uL6</fullName>
    </recommendedName>
    <alternativeName>
        <fullName evidence="2">50S ribosomal protein L6</fullName>
    </alternativeName>
</protein>
<evidence type="ECO:0000255" key="1">
    <source>
        <dbReference type="HAMAP-Rule" id="MF_01365"/>
    </source>
</evidence>
<evidence type="ECO:0000305" key="2"/>
<accession>B4U759</accession>
<name>RL6_HYDS0</name>
<organism>
    <name type="scientific">Hydrogenobaculum sp. (strain Y04AAS1)</name>
    <dbReference type="NCBI Taxonomy" id="380749"/>
    <lineage>
        <taxon>Bacteria</taxon>
        <taxon>Pseudomonadati</taxon>
        <taxon>Aquificota</taxon>
        <taxon>Aquificia</taxon>
        <taxon>Aquificales</taxon>
        <taxon>Aquificaceae</taxon>
        <taxon>Hydrogenobaculum</taxon>
    </lineage>
</organism>
<gene>
    <name evidence="1" type="primary">rplF</name>
    <name type="ordered locus">HY04AAS1_0280</name>
</gene>
<comment type="function">
    <text evidence="1">This protein binds to the 23S rRNA, and is important in its secondary structure. It is located near the subunit interface in the base of the L7/L12 stalk, and near the tRNA binding site of the peptidyltransferase center.</text>
</comment>
<comment type="subunit">
    <text evidence="1">Part of the 50S ribosomal subunit.</text>
</comment>
<comment type="similarity">
    <text evidence="1">Belongs to the universal ribosomal protein uL6 family.</text>
</comment>
<reference key="1">
    <citation type="journal article" date="2009" name="J. Bacteriol.">
        <title>Complete and draft genome sequences of six members of the Aquificales.</title>
        <authorList>
            <person name="Reysenbach A.-L."/>
            <person name="Hamamura N."/>
            <person name="Podar M."/>
            <person name="Griffiths E."/>
            <person name="Ferreira S."/>
            <person name="Hochstein R."/>
            <person name="Heidelberg J."/>
            <person name="Johnson J."/>
            <person name="Mead D."/>
            <person name="Pohorille A."/>
            <person name="Sarmiento M."/>
            <person name="Schweighofer K."/>
            <person name="Seshadri R."/>
            <person name="Voytek M.A."/>
        </authorList>
    </citation>
    <scope>NUCLEOTIDE SEQUENCE [LARGE SCALE GENOMIC DNA]</scope>
    <source>
        <strain>Y04AAS1</strain>
    </source>
</reference>